<keyword id="KW-1185">Reference proteome</keyword>
<evidence type="ECO:0000269" key="1">
    <source>
    </source>
</evidence>
<evidence type="ECO:0000303" key="2">
    <source>
    </source>
</evidence>
<evidence type="ECO:0000305" key="3">
    <source>
    </source>
</evidence>
<name>XANF_ASPFU</name>
<comment type="function">
    <text evidence="1">Part of the gene cluster that mediates the biosynthesis of the isocyanide xanthocillin and its derivatives (PubMed:29844112). The first step of the pathway consists in the conversion of tyrosine into a vinyl-isonitrile intermediate by the isocyanide synthase xanB (PubMed:29844112). Subsequent oxidative dimerization of this intermediate to form xanthocillin may involve the cytochrome P450 monooxygenase xanG, whose expression is coregulated with that of XanB (PubMed:29844112). Xanthocillin can be further modified by the isonitrile hydratase-like protein xanA which introduces N-formyl groups and the methyltransferase xanE which introduces methyl groups, leading to the production of several derivatives including fumiformamide (PubMed:29844112). Finally, fumiformamide can be subject to both oxidative and reductive cyclization to yield melanocins E and F, respectively (PubMed:29844112).</text>
</comment>
<comment type="pathway">
    <text evidence="3">Secondary metabolite biosynthesis.</text>
</comment>
<accession>Q4WED6</accession>
<proteinExistence type="predicted"/>
<feature type="chain" id="PRO_0000445295" description="Xanthocillin biosynthesis cluster protein F">
    <location>
        <begin position="1"/>
        <end position="226"/>
    </location>
</feature>
<reference key="1">
    <citation type="journal article" date="2005" name="Nature">
        <title>Genomic sequence of the pathogenic and allergenic filamentous fungus Aspergillus fumigatus.</title>
        <authorList>
            <person name="Nierman W.C."/>
            <person name="Pain A."/>
            <person name="Anderson M.J."/>
            <person name="Wortman J.R."/>
            <person name="Kim H.S."/>
            <person name="Arroyo J."/>
            <person name="Berriman M."/>
            <person name="Abe K."/>
            <person name="Archer D.B."/>
            <person name="Bermejo C."/>
            <person name="Bennett J.W."/>
            <person name="Bowyer P."/>
            <person name="Chen D."/>
            <person name="Collins M."/>
            <person name="Coulsen R."/>
            <person name="Davies R."/>
            <person name="Dyer P.S."/>
            <person name="Farman M.L."/>
            <person name="Fedorova N."/>
            <person name="Fedorova N.D."/>
            <person name="Feldblyum T.V."/>
            <person name="Fischer R."/>
            <person name="Fosker N."/>
            <person name="Fraser A."/>
            <person name="Garcia J.L."/>
            <person name="Garcia M.J."/>
            <person name="Goble A."/>
            <person name="Goldman G.H."/>
            <person name="Gomi K."/>
            <person name="Griffith-Jones S."/>
            <person name="Gwilliam R."/>
            <person name="Haas B.J."/>
            <person name="Haas H."/>
            <person name="Harris D.E."/>
            <person name="Horiuchi H."/>
            <person name="Huang J."/>
            <person name="Humphray S."/>
            <person name="Jimenez J."/>
            <person name="Keller N."/>
            <person name="Khouri H."/>
            <person name="Kitamoto K."/>
            <person name="Kobayashi T."/>
            <person name="Konzack S."/>
            <person name="Kulkarni R."/>
            <person name="Kumagai T."/>
            <person name="Lafton A."/>
            <person name="Latge J.-P."/>
            <person name="Li W."/>
            <person name="Lord A."/>
            <person name="Lu C."/>
            <person name="Majoros W.H."/>
            <person name="May G.S."/>
            <person name="Miller B.L."/>
            <person name="Mohamoud Y."/>
            <person name="Molina M."/>
            <person name="Monod M."/>
            <person name="Mouyna I."/>
            <person name="Mulligan S."/>
            <person name="Murphy L.D."/>
            <person name="O'Neil S."/>
            <person name="Paulsen I."/>
            <person name="Penalva M.A."/>
            <person name="Pertea M."/>
            <person name="Price C."/>
            <person name="Pritchard B.L."/>
            <person name="Quail M.A."/>
            <person name="Rabbinowitsch E."/>
            <person name="Rawlins N."/>
            <person name="Rajandream M.A."/>
            <person name="Reichard U."/>
            <person name="Renauld H."/>
            <person name="Robson G.D."/>
            <person name="Rodriguez de Cordoba S."/>
            <person name="Rodriguez-Pena J.M."/>
            <person name="Ronning C.M."/>
            <person name="Rutter S."/>
            <person name="Salzberg S.L."/>
            <person name="Sanchez M."/>
            <person name="Sanchez-Ferrero J.C."/>
            <person name="Saunders D."/>
            <person name="Seeger K."/>
            <person name="Squares R."/>
            <person name="Squares S."/>
            <person name="Takeuchi M."/>
            <person name="Tekaia F."/>
            <person name="Turner G."/>
            <person name="Vazquez de Aldana C.R."/>
            <person name="Weidman J."/>
            <person name="White O."/>
            <person name="Woodward J.R."/>
            <person name="Yu J.-H."/>
            <person name="Fraser C.M."/>
            <person name="Galagan J.E."/>
            <person name="Asai K."/>
            <person name="Machida M."/>
            <person name="Hall N."/>
            <person name="Barrell B.G."/>
            <person name="Denning D.W."/>
        </authorList>
    </citation>
    <scope>NUCLEOTIDE SEQUENCE [LARGE SCALE GENOMIC DNA]</scope>
    <source>
        <strain>ATCC MYA-4609 / CBS 101355 / FGSC A1100 / Af293</strain>
    </source>
</reference>
<reference key="2">
    <citation type="journal article" date="2018" name="MBio">
        <title>Fungal isocyanide synthases and xanthocillin biosynthesis in Aspergillus fumigatus.</title>
        <authorList>
            <person name="Lim F.Y."/>
            <person name="Won T.H."/>
            <person name="Raffa N."/>
            <person name="Baccile J.A."/>
            <person name="Wisecaver J."/>
            <person name="Rokas A."/>
            <person name="Schroeder F.C."/>
            <person name="Keller N.P."/>
        </authorList>
    </citation>
    <scope>FUNCTION</scope>
    <scope>PATHWAY</scope>
</reference>
<sequence>MATEALHMHKDRLSAEDLDLKDPHVSSSLALFAIHNLIRRNLKACAEHAITVQPANIDAFVTYAKYTLHVLRDQLTSVDEIWFPVFAEHDPRFLAQKDAHDALYQRITAVDAQLATPPAELGQNELLSAEIAAAFAELHELTDKQYDLEEDLINQLGRKVPMDTIRGLEKKQEERRRADVKVYGHLWTAVYLLRGLDPKERAIFPPGIPKLIAGGMLTAGAMQFRR</sequence>
<protein>
    <recommendedName>
        <fullName evidence="2">Xanthocillin biosynthesis cluster protein F</fullName>
    </recommendedName>
</protein>
<organism>
    <name type="scientific">Aspergillus fumigatus (strain ATCC MYA-4609 / CBS 101355 / FGSC A1100 / Af293)</name>
    <name type="common">Neosartorya fumigata</name>
    <dbReference type="NCBI Taxonomy" id="330879"/>
    <lineage>
        <taxon>Eukaryota</taxon>
        <taxon>Fungi</taxon>
        <taxon>Dikarya</taxon>
        <taxon>Ascomycota</taxon>
        <taxon>Pezizomycotina</taxon>
        <taxon>Eurotiomycetes</taxon>
        <taxon>Eurotiomycetidae</taxon>
        <taxon>Eurotiales</taxon>
        <taxon>Aspergillaceae</taxon>
        <taxon>Aspergillus</taxon>
        <taxon>Aspergillus subgen. Fumigati</taxon>
    </lineage>
</organism>
<gene>
    <name evidence="2" type="primary">xanF</name>
    <name type="ORF">AFUA_5G02630</name>
</gene>
<dbReference type="EMBL" id="AAHF01000011">
    <property type="protein sequence ID" value="EAL86041.1"/>
    <property type="molecule type" value="Genomic_DNA"/>
</dbReference>
<dbReference type="RefSeq" id="XP_748079.1">
    <property type="nucleotide sequence ID" value="XM_742986.1"/>
</dbReference>
<dbReference type="SMR" id="Q4WED6"/>
<dbReference type="STRING" id="330879.Q4WED6"/>
<dbReference type="EnsemblFungi" id="EAL86041">
    <property type="protein sequence ID" value="EAL86041"/>
    <property type="gene ID" value="AFUA_5G02630"/>
</dbReference>
<dbReference type="GeneID" id="3505487"/>
<dbReference type="KEGG" id="afm:AFUA_5G02630"/>
<dbReference type="VEuPathDB" id="FungiDB:Afu5g02630"/>
<dbReference type="eggNOG" id="ENOG502SVME">
    <property type="taxonomic scope" value="Eukaryota"/>
</dbReference>
<dbReference type="HOGENOM" id="CLU_1151594_0_0_1"/>
<dbReference type="InParanoid" id="Q4WED6"/>
<dbReference type="OMA" id="TEALHMH"/>
<dbReference type="OrthoDB" id="5282072at2759"/>
<dbReference type="Proteomes" id="UP000002530">
    <property type="component" value="Chromosome 5"/>
</dbReference>